<feature type="chain" id="PRO_1000139298" description="Cyclic pyranopterin monophosphate synthase">
    <location>
        <begin position="1"/>
        <end position="158"/>
    </location>
</feature>
<feature type="active site" evidence="1">
    <location>
        <position position="129"/>
    </location>
</feature>
<feature type="binding site" evidence="1">
    <location>
        <begin position="76"/>
        <end position="78"/>
    </location>
    <ligand>
        <name>substrate</name>
    </ligand>
</feature>
<feature type="binding site" evidence="1">
    <location>
        <begin position="114"/>
        <end position="115"/>
    </location>
    <ligand>
        <name>substrate</name>
    </ligand>
</feature>
<comment type="function">
    <text evidence="1">Catalyzes the conversion of (8S)-3',8-cyclo-7,8-dihydroguanosine 5'-triphosphate to cyclic pyranopterin monophosphate (cPMP).</text>
</comment>
<comment type="catalytic activity">
    <reaction evidence="1">
        <text>(8S)-3',8-cyclo-7,8-dihydroguanosine 5'-triphosphate = cyclic pyranopterin phosphate + diphosphate</text>
        <dbReference type="Rhea" id="RHEA:49580"/>
        <dbReference type="ChEBI" id="CHEBI:33019"/>
        <dbReference type="ChEBI" id="CHEBI:59648"/>
        <dbReference type="ChEBI" id="CHEBI:131766"/>
        <dbReference type="EC" id="4.6.1.17"/>
    </reaction>
</comment>
<comment type="pathway">
    <text evidence="1">Cofactor biosynthesis; molybdopterin biosynthesis.</text>
</comment>
<comment type="subunit">
    <text evidence="1">Homohexamer; trimer of dimers.</text>
</comment>
<comment type="similarity">
    <text evidence="1">Belongs to the MoaC family.</text>
</comment>
<keyword id="KW-0456">Lyase</keyword>
<keyword id="KW-0501">Molybdenum cofactor biosynthesis</keyword>
<keyword id="KW-1185">Reference proteome</keyword>
<reference key="1">
    <citation type="submission" date="2008-02" db="EMBL/GenBank/DDBJ databases">
        <title>Complete sequence of Shewanella woodyi ATCC 51908.</title>
        <authorList>
            <consortium name="US DOE Joint Genome Institute"/>
            <person name="Copeland A."/>
            <person name="Lucas S."/>
            <person name="Lapidus A."/>
            <person name="Glavina del Rio T."/>
            <person name="Dalin E."/>
            <person name="Tice H."/>
            <person name="Bruce D."/>
            <person name="Goodwin L."/>
            <person name="Pitluck S."/>
            <person name="Sims D."/>
            <person name="Brettin T."/>
            <person name="Detter J.C."/>
            <person name="Han C."/>
            <person name="Kuske C.R."/>
            <person name="Schmutz J."/>
            <person name="Larimer F."/>
            <person name="Land M."/>
            <person name="Hauser L."/>
            <person name="Kyrpides N."/>
            <person name="Lykidis A."/>
            <person name="Zhao J.-S."/>
            <person name="Richardson P."/>
        </authorList>
    </citation>
    <scope>NUCLEOTIDE SEQUENCE [LARGE SCALE GENOMIC DNA]</scope>
    <source>
        <strain>ATCC 51908 / MS32</strain>
    </source>
</reference>
<gene>
    <name evidence="1" type="primary">moaC</name>
    <name type="ordered locus">Swoo_4791</name>
</gene>
<proteinExistence type="inferred from homology"/>
<organism>
    <name type="scientific">Shewanella woodyi (strain ATCC 51908 / MS32)</name>
    <dbReference type="NCBI Taxonomy" id="392500"/>
    <lineage>
        <taxon>Bacteria</taxon>
        <taxon>Pseudomonadati</taxon>
        <taxon>Pseudomonadota</taxon>
        <taxon>Gammaproteobacteria</taxon>
        <taxon>Alteromonadales</taxon>
        <taxon>Shewanellaceae</taxon>
        <taxon>Shewanella</taxon>
    </lineage>
</organism>
<accession>B1KP09</accession>
<evidence type="ECO:0000255" key="1">
    <source>
        <dbReference type="HAMAP-Rule" id="MF_01224"/>
    </source>
</evidence>
<dbReference type="EC" id="4.6.1.17" evidence="1"/>
<dbReference type="EMBL" id="CP000961">
    <property type="protein sequence ID" value="ACA89040.1"/>
    <property type="molecule type" value="Genomic_DNA"/>
</dbReference>
<dbReference type="RefSeq" id="WP_012327357.1">
    <property type="nucleotide sequence ID" value="NC_010506.1"/>
</dbReference>
<dbReference type="SMR" id="B1KP09"/>
<dbReference type="STRING" id="392500.Swoo_4791"/>
<dbReference type="KEGG" id="swd:Swoo_4791"/>
<dbReference type="eggNOG" id="COG0315">
    <property type="taxonomic scope" value="Bacteria"/>
</dbReference>
<dbReference type="HOGENOM" id="CLU_074693_1_1_6"/>
<dbReference type="UniPathway" id="UPA00344"/>
<dbReference type="Proteomes" id="UP000002168">
    <property type="component" value="Chromosome"/>
</dbReference>
<dbReference type="GO" id="GO:0061799">
    <property type="term" value="F:cyclic pyranopterin monophosphate synthase activity"/>
    <property type="evidence" value="ECO:0007669"/>
    <property type="project" value="UniProtKB-UniRule"/>
</dbReference>
<dbReference type="GO" id="GO:0061798">
    <property type="term" value="F:GTP 3',8'-cyclase activity"/>
    <property type="evidence" value="ECO:0007669"/>
    <property type="project" value="TreeGrafter"/>
</dbReference>
<dbReference type="GO" id="GO:0006777">
    <property type="term" value="P:Mo-molybdopterin cofactor biosynthetic process"/>
    <property type="evidence" value="ECO:0007669"/>
    <property type="project" value="UniProtKB-UniRule"/>
</dbReference>
<dbReference type="CDD" id="cd01420">
    <property type="entry name" value="MoaC_PE"/>
    <property type="match status" value="1"/>
</dbReference>
<dbReference type="FunFam" id="3.30.70.640:FF:000001">
    <property type="entry name" value="Cyclic pyranopterin monophosphate synthase"/>
    <property type="match status" value="1"/>
</dbReference>
<dbReference type="Gene3D" id="3.30.70.640">
    <property type="entry name" value="Molybdopterin cofactor biosynthesis C (MoaC) domain"/>
    <property type="match status" value="1"/>
</dbReference>
<dbReference type="HAMAP" id="MF_01224_B">
    <property type="entry name" value="MoaC_B"/>
    <property type="match status" value="1"/>
</dbReference>
<dbReference type="InterPro" id="IPR023045">
    <property type="entry name" value="MoaC"/>
</dbReference>
<dbReference type="InterPro" id="IPR047594">
    <property type="entry name" value="MoaC_bact/euk"/>
</dbReference>
<dbReference type="InterPro" id="IPR036522">
    <property type="entry name" value="MoaC_sf"/>
</dbReference>
<dbReference type="InterPro" id="IPR050105">
    <property type="entry name" value="MoCo_biosynth_MoaA/MoaC"/>
</dbReference>
<dbReference type="InterPro" id="IPR002820">
    <property type="entry name" value="Mopterin_CF_biosynth-C_dom"/>
</dbReference>
<dbReference type="NCBIfam" id="TIGR00581">
    <property type="entry name" value="moaC"/>
    <property type="match status" value="1"/>
</dbReference>
<dbReference type="NCBIfam" id="NF006870">
    <property type="entry name" value="PRK09364.1"/>
    <property type="match status" value="1"/>
</dbReference>
<dbReference type="PANTHER" id="PTHR22960:SF0">
    <property type="entry name" value="MOLYBDENUM COFACTOR BIOSYNTHESIS PROTEIN 1"/>
    <property type="match status" value="1"/>
</dbReference>
<dbReference type="PANTHER" id="PTHR22960">
    <property type="entry name" value="MOLYBDOPTERIN COFACTOR SYNTHESIS PROTEIN A"/>
    <property type="match status" value="1"/>
</dbReference>
<dbReference type="Pfam" id="PF01967">
    <property type="entry name" value="MoaC"/>
    <property type="match status" value="1"/>
</dbReference>
<dbReference type="SUPFAM" id="SSF55040">
    <property type="entry name" value="Molybdenum cofactor biosynthesis protein C, MoaC"/>
    <property type="match status" value="1"/>
</dbReference>
<protein>
    <recommendedName>
        <fullName evidence="1">Cyclic pyranopterin monophosphate synthase</fullName>
        <ecNumber evidence="1">4.6.1.17</ecNumber>
    </recommendedName>
    <alternativeName>
        <fullName evidence="1">Molybdenum cofactor biosynthesis protein C</fullName>
    </alternativeName>
</protein>
<sequence>MSNEFTHINADGNAHMVDVTEKAVTEREARAEAFIEMAPATLEMIMSGSHHKGDVFATARIAGIQAAKKTSDLIPLCHPLMLTKVEVELEAQPEHSRVRITSLCKLSGKTGVEMEALTAASVAALTIYDMCKAVQKDMVISQTRLLEKRGGKSGHFKV</sequence>
<name>MOAC_SHEWM</name>